<comment type="function">
    <text evidence="1">The key enzymatic reactions in nitrogen fixation are catalyzed by the nitrogenase complex, which has 2 components: the iron protein and the molybdenum-iron protein.</text>
</comment>
<comment type="catalytic activity">
    <reaction>
        <text>N2 + 8 reduced [2Fe-2S]-[ferredoxin] + 16 ATP + 16 H2O = H2 + 8 oxidized [2Fe-2S]-[ferredoxin] + 2 NH4(+) + 16 ADP + 16 phosphate + 6 H(+)</text>
        <dbReference type="Rhea" id="RHEA:21448"/>
        <dbReference type="Rhea" id="RHEA-COMP:10000"/>
        <dbReference type="Rhea" id="RHEA-COMP:10001"/>
        <dbReference type="ChEBI" id="CHEBI:15377"/>
        <dbReference type="ChEBI" id="CHEBI:15378"/>
        <dbReference type="ChEBI" id="CHEBI:17997"/>
        <dbReference type="ChEBI" id="CHEBI:18276"/>
        <dbReference type="ChEBI" id="CHEBI:28938"/>
        <dbReference type="ChEBI" id="CHEBI:30616"/>
        <dbReference type="ChEBI" id="CHEBI:33737"/>
        <dbReference type="ChEBI" id="CHEBI:33738"/>
        <dbReference type="ChEBI" id="CHEBI:43474"/>
        <dbReference type="ChEBI" id="CHEBI:456216"/>
        <dbReference type="EC" id="1.18.6.1"/>
    </reaction>
</comment>
<comment type="cofactor">
    <cofactor evidence="1">
        <name>[4Fe-4S] cluster</name>
        <dbReference type="ChEBI" id="CHEBI:49883"/>
    </cofactor>
    <text evidence="1">Binds 1 [4Fe-4S] cluster per dimer.</text>
</comment>
<comment type="subunit">
    <text evidence="1">Homodimer.</text>
</comment>
<comment type="PTM">
    <text evidence="1">The reversible ADP-ribosylation of Arg-102 inactivates the nitrogenase reductase and regulates nitrogenase activity.</text>
</comment>
<comment type="similarity">
    <text evidence="3">Belongs to the NifH/BchL/ChlL family.</text>
</comment>
<organism>
    <name type="scientific">Sinorhizobium fredii (strain NBRC 101917 / NGR234)</name>
    <dbReference type="NCBI Taxonomy" id="394"/>
    <lineage>
        <taxon>Bacteria</taxon>
        <taxon>Pseudomonadati</taxon>
        <taxon>Pseudomonadota</taxon>
        <taxon>Alphaproteobacteria</taxon>
        <taxon>Hyphomicrobiales</taxon>
        <taxon>Rhizobiaceae</taxon>
        <taxon>Sinorhizobium/Ensifer group</taxon>
        <taxon>Sinorhizobium</taxon>
    </lineage>
</organism>
<gene>
    <name type="primary">nifH1</name>
    <name type="ordered locus">NGR_a01130</name>
    <name type="ORF">y4vK</name>
</gene>
<gene>
    <name type="primary">nifH2</name>
    <name type="ordered locus">NGR_a00890</name>
    <name type="ORF">y4xA</name>
</gene>
<sequence>MAGLRQIAFYGKGGIGKSTTSQNTLAALVDLGQKILIVGCDPKADSTRLILNAKAQDTVLHLAAKEGSVEDLEVEDVLKVGYKGIKCVESGGPEPGVGCAGRGVITSINFLEENGAYDDVDYVSYDVLGDVVCGGFAMPIRENKAQEIYIVMSGEMMALYAANNIAKGILKYAHSGGVRLGGLICNERQTDRELDLAEALAAKLNSRLIHFVPRDNIVQHAELRKMTVIQYAPESQQAAEYRALADKIHANSGQGTVPTPITMEELEDMLLDFGVMKTDEQMLAELQAKEAAAAAQ</sequence>
<dbReference type="EC" id="1.18.6.1"/>
<dbReference type="EMBL" id="AH000924">
    <property type="protein sequence ID" value="AAA26329.1"/>
    <property type="molecule type" value="Genomic_DNA"/>
</dbReference>
<dbReference type="EMBL" id="U00090">
    <property type="protein sequence ID" value="AAB91899.1"/>
    <property type="molecule type" value="Genomic_DNA"/>
</dbReference>
<dbReference type="EMBL" id="U00090">
    <property type="protein sequence ID" value="AAB91923.1"/>
    <property type="molecule type" value="Genomic_DNA"/>
</dbReference>
<dbReference type="PIR" id="JS0238">
    <property type="entry name" value="JS0238"/>
</dbReference>
<dbReference type="RefSeq" id="NP_444112.1">
    <property type="nucleotide sequence ID" value="NC_000914.2"/>
</dbReference>
<dbReference type="RefSeq" id="NP_444136.1">
    <property type="nucleotide sequence ID" value="NC_000914.2"/>
</dbReference>
<dbReference type="SMR" id="P19068"/>
<dbReference type="KEGG" id="rhi:NGR_a00890"/>
<dbReference type="KEGG" id="rhi:NGR_a01130"/>
<dbReference type="PATRIC" id="fig|394.7.peg.78"/>
<dbReference type="eggNOG" id="COG1348">
    <property type="taxonomic scope" value="Bacteria"/>
</dbReference>
<dbReference type="HOGENOM" id="CLU_059373_0_0_5"/>
<dbReference type="OrthoDB" id="9778641at2"/>
<dbReference type="Proteomes" id="UP000001054">
    <property type="component" value="Plasmid pNGR234a"/>
</dbReference>
<dbReference type="GO" id="GO:0051539">
    <property type="term" value="F:4 iron, 4 sulfur cluster binding"/>
    <property type="evidence" value="ECO:0007669"/>
    <property type="project" value="UniProtKB-KW"/>
</dbReference>
<dbReference type="GO" id="GO:0005524">
    <property type="term" value="F:ATP binding"/>
    <property type="evidence" value="ECO:0007669"/>
    <property type="project" value="UniProtKB-UniRule"/>
</dbReference>
<dbReference type="GO" id="GO:0046872">
    <property type="term" value="F:metal ion binding"/>
    <property type="evidence" value="ECO:0007669"/>
    <property type="project" value="UniProtKB-KW"/>
</dbReference>
<dbReference type="GO" id="GO:0016163">
    <property type="term" value="F:nitrogenase activity"/>
    <property type="evidence" value="ECO:0007669"/>
    <property type="project" value="UniProtKB-UniRule"/>
</dbReference>
<dbReference type="GO" id="GO:0009399">
    <property type="term" value="P:nitrogen fixation"/>
    <property type="evidence" value="ECO:0007669"/>
    <property type="project" value="UniProtKB-UniRule"/>
</dbReference>
<dbReference type="CDD" id="cd02040">
    <property type="entry name" value="NifH"/>
    <property type="match status" value="1"/>
</dbReference>
<dbReference type="FunFam" id="3.40.50.300:FF:001379">
    <property type="entry name" value="Nitrogenase iron protein 1"/>
    <property type="match status" value="1"/>
</dbReference>
<dbReference type="Gene3D" id="3.40.50.300">
    <property type="entry name" value="P-loop containing nucleotide triphosphate hydrolases"/>
    <property type="match status" value="1"/>
</dbReference>
<dbReference type="HAMAP" id="MF_00533">
    <property type="entry name" value="NifH"/>
    <property type="match status" value="1"/>
</dbReference>
<dbReference type="InterPro" id="IPR030655">
    <property type="entry name" value="NifH/chlL_CS"/>
</dbReference>
<dbReference type="InterPro" id="IPR000392">
    <property type="entry name" value="NifH/frxC"/>
</dbReference>
<dbReference type="InterPro" id="IPR005977">
    <property type="entry name" value="Nitrogenase_Fe_NifH"/>
</dbReference>
<dbReference type="InterPro" id="IPR027417">
    <property type="entry name" value="P-loop_NTPase"/>
</dbReference>
<dbReference type="NCBIfam" id="TIGR01287">
    <property type="entry name" value="nifH"/>
    <property type="match status" value="1"/>
</dbReference>
<dbReference type="PANTHER" id="PTHR42864">
    <property type="entry name" value="LIGHT-INDEPENDENT PROTOCHLOROPHYLLIDE REDUCTASE IRON-SULFUR ATP-BINDING PROTEIN"/>
    <property type="match status" value="1"/>
</dbReference>
<dbReference type="PANTHER" id="PTHR42864:SF2">
    <property type="entry name" value="LIGHT-INDEPENDENT PROTOCHLOROPHYLLIDE REDUCTASE IRON-SULFUR ATP-BINDING PROTEIN"/>
    <property type="match status" value="1"/>
</dbReference>
<dbReference type="Pfam" id="PF00142">
    <property type="entry name" value="Fer4_NifH"/>
    <property type="match status" value="1"/>
</dbReference>
<dbReference type="PIRSF" id="PIRSF000363">
    <property type="entry name" value="Nitrogenase_iron"/>
    <property type="match status" value="1"/>
</dbReference>
<dbReference type="PRINTS" id="PR00091">
    <property type="entry name" value="NITROGNASEII"/>
</dbReference>
<dbReference type="SUPFAM" id="SSF52540">
    <property type="entry name" value="P-loop containing nucleoside triphosphate hydrolases"/>
    <property type="match status" value="1"/>
</dbReference>
<dbReference type="PROSITE" id="PS00746">
    <property type="entry name" value="NIFH_FRXC_1"/>
    <property type="match status" value="1"/>
</dbReference>
<dbReference type="PROSITE" id="PS00692">
    <property type="entry name" value="NIFH_FRXC_2"/>
    <property type="match status" value="1"/>
</dbReference>
<dbReference type="PROSITE" id="PS51026">
    <property type="entry name" value="NIFH_FRXC_3"/>
    <property type="match status" value="1"/>
</dbReference>
<feature type="chain" id="PRO_0000139525" description="Nitrogenase iron protein">
    <location>
        <begin position="1"/>
        <end position="296"/>
    </location>
</feature>
<feature type="binding site" evidence="2">
    <location>
        <begin position="11"/>
        <end position="18"/>
    </location>
    <ligand>
        <name>ATP</name>
        <dbReference type="ChEBI" id="CHEBI:30616"/>
    </ligand>
</feature>
<feature type="binding site" evidence="1">
    <location>
        <position position="99"/>
    </location>
    <ligand>
        <name>[4Fe-4S] cluster</name>
        <dbReference type="ChEBI" id="CHEBI:49883"/>
        <note>ligand shared between dimeric partners</note>
    </ligand>
</feature>
<feature type="binding site" evidence="1">
    <location>
        <position position="133"/>
    </location>
    <ligand>
        <name>[4Fe-4S] cluster</name>
        <dbReference type="ChEBI" id="CHEBI:49883"/>
        <note>ligand shared between dimeric partners</note>
    </ligand>
</feature>
<feature type="modified residue" description="ADP-ribosylarginine; by dinitrogenase reductase ADP-ribosyltransferase" evidence="1">
    <location>
        <position position="102"/>
    </location>
</feature>
<feature type="sequence conflict" description="In Ref. 1; AAA26329." evidence="3" ref="1">
    <original>T</original>
    <variation>N</variation>
    <location>
        <position position="262"/>
    </location>
</feature>
<geneLocation type="plasmid">
    <name>sym pNGR234a</name>
</geneLocation>
<name>NIFH_SINFN</name>
<evidence type="ECO:0000250" key="1"/>
<evidence type="ECO:0000255" key="2"/>
<evidence type="ECO:0000305" key="3"/>
<keyword id="KW-0004">4Fe-4S</keyword>
<keyword id="KW-0013">ADP-ribosylation</keyword>
<keyword id="KW-0067">ATP-binding</keyword>
<keyword id="KW-0408">Iron</keyword>
<keyword id="KW-0411">Iron-sulfur</keyword>
<keyword id="KW-0479">Metal-binding</keyword>
<keyword id="KW-0535">Nitrogen fixation</keyword>
<keyword id="KW-0547">Nucleotide-binding</keyword>
<keyword id="KW-0560">Oxidoreductase</keyword>
<keyword id="KW-0614">Plasmid</keyword>
<keyword id="KW-1185">Reference proteome</keyword>
<proteinExistence type="inferred from homology"/>
<protein>
    <recommendedName>
        <fullName>Nitrogenase iron protein</fullName>
        <ecNumber>1.18.6.1</ecNumber>
    </recommendedName>
    <alternativeName>
        <fullName>Nitrogenase Fe protein</fullName>
    </alternativeName>
    <alternativeName>
        <fullName>Nitrogenase component II</fullName>
    </alternativeName>
    <alternativeName>
        <fullName>Nitrogenase reductase</fullName>
    </alternativeName>
</protein>
<accession>P19068</accession>
<accession>P55672</accession>
<reference key="1">
    <citation type="journal article" date="1989" name="Gene">
        <title>Structural and functional analysis of nitrogenase genes from the broad-host-range Rhizobium strain ANU240.</title>
        <authorList>
            <person name="Badenoch-Jones J."/>
            <person name="Holton T.A."/>
            <person name="Morrison C.M."/>
            <person name="Scott K.F."/>
            <person name="Shine J."/>
        </authorList>
    </citation>
    <scope>NUCLEOTIDE SEQUENCE [GENOMIC DNA]</scope>
    <source>
        <strain>ANU 240</strain>
    </source>
</reference>
<reference key="2">
    <citation type="journal article" date="1997" name="Nature">
        <title>Molecular basis of symbiosis between Rhizobium and legumes.</title>
        <authorList>
            <person name="Freiberg C.A."/>
            <person name="Fellay R."/>
            <person name="Bairoch A."/>
            <person name="Broughton W.J."/>
            <person name="Rosenthal A."/>
            <person name="Perret X."/>
        </authorList>
    </citation>
    <scope>NUCLEOTIDE SEQUENCE [LARGE SCALE GENOMIC DNA]</scope>
    <source>
        <strain>NBRC 101917 / NGR234</strain>
    </source>
</reference>
<reference key="3">
    <citation type="journal article" date="2009" name="Appl. Environ. Microbiol.">
        <title>Rhizobium sp. strain NGR234 possesses a remarkable number of secretion systems.</title>
        <authorList>
            <person name="Schmeisser C."/>
            <person name="Liesegang H."/>
            <person name="Krysciak D."/>
            <person name="Bakkou N."/>
            <person name="Le Quere A."/>
            <person name="Wollherr A."/>
            <person name="Heinemeyer I."/>
            <person name="Morgenstern B."/>
            <person name="Pommerening-Roeser A."/>
            <person name="Flores M."/>
            <person name="Palacios R."/>
            <person name="Brenner S."/>
            <person name="Gottschalk G."/>
            <person name="Schmitz R.A."/>
            <person name="Broughton W.J."/>
            <person name="Perret X."/>
            <person name="Strittmatter A.W."/>
            <person name="Streit W.R."/>
        </authorList>
    </citation>
    <scope>NUCLEOTIDE SEQUENCE [LARGE SCALE GENOMIC DNA]</scope>
    <source>
        <strain>NBRC 101917 / NGR234</strain>
    </source>
</reference>